<dbReference type="EMBL" id="EF672560">
    <property type="protein sequence ID" value="ABV53232.1"/>
    <property type="molecule type" value="Genomic_DNA"/>
</dbReference>
<dbReference type="SMR" id="B3SRQ7"/>
<dbReference type="Proteomes" id="UP000001455">
    <property type="component" value="Genome"/>
</dbReference>
<dbReference type="GO" id="GO:0044166">
    <property type="term" value="C:host cell endoplasmic reticulum lumen"/>
    <property type="evidence" value="ECO:0007669"/>
    <property type="project" value="UniProtKB-SubCell"/>
</dbReference>
<dbReference type="GO" id="GO:0039621">
    <property type="term" value="C:T=13 icosahedral viral capsid"/>
    <property type="evidence" value="ECO:0007669"/>
    <property type="project" value="UniProtKB-UniRule"/>
</dbReference>
<dbReference type="GO" id="GO:0039624">
    <property type="term" value="C:viral outer capsid"/>
    <property type="evidence" value="ECO:0007669"/>
    <property type="project" value="UniProtKB-UniRule"/>
</dbReference>
<dbReference type="GO" id="GO:0046872">
    <property type="term" value="F:metal ion binding"/>
    <property type="evidence" value="ECO:0007669"/>
    <property type="project" value="UniProtKB-KW"/>
</dbReference>
<dbReference type="Gene3D" id="3.40.50.11130">
    <property type="entry name" value="Glycoprotein VP7, domain 1"/>
    <property type="match status" value="1"/>
</dbReference>
<dbReference type="Gene3D" id="2.60.120.800">
    <property type="entry name" value="Rotavirus outer-layer protein VP7, domain 2"/>
    <property type="match status" value="1"/>
</dbReference>
<dbReference type="HAMAP" id="MF_04130">
    <property type="entry name" value="Rota_VP7"/>
    <property type="match status" value="1"/>
</dbReference>
<dbReference type="HAMAP" id="MF_04131">
    <property type="entry name" value="Rota_VP7_A"/>
    <property type="match status" value="1"/>
</dbReference>
<dbReference type="InterPro" id="IPR001963">
    <property type="entry name" value="VP7"/>
</dbReference>
<dbReference type="InterPro" id="IPR042207">
    <property type="entry name" value="VP7_1"/>
</dbReference>
<dbReference type="InterPro" id="IPR042210">
    <property type="entry name" value="VP7_2"/>
</dbReference>
<dbReference type="Pfam" id="PF00434">
    <property type="entry name" value="VP7"/>
    <property type="match status" value="1"/>
</dbReference>
<sequence>MYGIEYTTTLTFLILLVLLNYILKSITRIMDYILYHFLLFIVIVTPFVNSQNYGINLPITGSMDTNYQNVSNPEPFLTSTLCLYYPVEAETEIADSSWKDTLSQLFLTKGWPTGSVYLKSYTDIATFSINPQLYCDYNIVLMKYNANSELDMSELADLILNEWLCNPMDIALYYYQQTDEANKWISMGDSCTIKVCPLNTQTLGIGCLTTDTTTFEEVATAEKLVITDVVDGVNYKINVTTTTCTIRNCKKLGPRENVAVIQVGGSNILDITADPTTAPQTERMMRINWKKWWQVFYTVVDYVNQIIQTMSKRSRSLDSASFYYRI</sequence>
<feature type="signal peptide" evidence="2">
    <location>
        <begin position="1"/>
        <end position="50"/>
    </location>
</feature>
<feature type="chain" id="PRO_0000369110" description="Outer capsid glycoprotein VP7" evidence="2">
    <location>
        <begin position="51"/>
        <end position="326"/>
    </location>
</feature>
<feature type="region of interest" description="CNP motif; interaction with ITGAV/ITGB3" evidence="2">
    <location>
        <begin position="165"/>
        <end position="167"/>
    </location>
</feature>
<feature type="region of interest" description="GPR motif; interaction with ITGAX/ITGB2" evidence="2">
    <location>
        <begin position="253"/>
        <end position="255"/>
    </location>
</feature>
<feature type="binding site" evidence="2">
    <location>
        <position position="95"/>
    </location>
    <ligand>
        <name>Ca(2+)</name>
        <dbReference type="ChEBI" id="CHEBI:29108"/>
        <label>1</label>
    </ligand>
</feature>
<feature type="binding site" evidence="2">
    <location>
        <position position="177"/>
    </location>
    <ligand>
        <name>Ca(2+)</name>
        <dbReference type="ChEBI" id="CHEBI:29108"/>
        <label>2</label>
    </ligand>
</feature>
<feature type="binding site" evidence="2">
    <location>
        <position position="206"/>
    </location>
    <ligand>
        <name>Ca(2+)</name>
        <dbReference type="ChEBI" id="CHEBI:29108"/>
        <label>1</label>
    </ligand>
</feature>
<feature type="binding site" evidence="2">
    <location>
        <position position="214"/>
    </location>
    <ligand>
        <name>Ca(2+)</name>
        <dbReference type="ChEBI" id="CHEBI:29108"/>
        <label>1</label>
    </ligand>
</feature>
<feature type="binding site" evidence="2">
    <location>
        <position position="216"/>
    </location>
    <ligand>
        <name>Ca(2+)</name>
        <dbReference type="ChEBI" id="CHEBI:29108"/>
        <label>1</label>
    </ligand>
</feature>
<feature type="binding site" evidence="2">
    <location>
        <position position="228"/>
    </location>
    <ligand>
        <name>Ca(2+)</name>
        <dbReference type="ChEBI" id="CHEBI:29108"/>
        <label>2</label>
    </ligand>
</feature>
<feature type="binding site" evidence="2">
    <location>
        <position position="229"/>
    </location>
    <ligand>
        <name>Ca(2+)</name>
        <dbReference type="ChEBI" id="CHEBI:29108"/>
        <label>2</label>
    </ligand>
</feature>
<feature type="binding site" evidence="2">
    <location>
        <position position="231"/>
    </location>
    <ligand>
        <name>Ca(2+)</name>
        <dbReference type="ChEBI" id="CHEBI:29108"/>
        <label>2</label>
    </ligand>
</feature>
<feature type="binding site" evidence="2">
    <location>
        <position position="301"/>
    </location>
    <ligand>
        <name>Ca(2+)</name>
        <dbReference type="ChEBI" id="CHEBI:29108"/>
        <label>2</label>
    </ligand>
</feature>
<feature type="glycosylation site" description="N-linked (GlcNAc...) asparagine; by host" evidence="1">
    <location>
        <position position="69"/>
    </location>
</feature>
<feature type="glycosylation site" description="N-linked (GlcNAc...) asparagine; by host" evidence="1">
    <location>
        <position position="238"/>
    </location>
</feature>
<feature type="disulfide bond" evidence="2">
    <location>
        <begin position="82"/>
        <end position="135"/>
    </location>
</feature>
<feature type="disulfide bond" evidence="2">
    <location>
        <begin position="165"/>
        <end position="249"/>
    </location>
</feature>
<feature type="disulfide bond" evidence="2">
    <location>
        <begin position="191"/>
        <end position="244"/>
    </location>
</feature>
<feature type="disulfide bond" evidence="2">
    <location>
        <begin position="196"/>
        <end position="207"/>
    </location>
</feature>
<feature type="splice variant" id="VSP_038617" description="In isoform 2." evidence="3">
    <location>
        <begin position="1"/>
        <end position="29"/>
    </location>
</feature>
<name>VP7_ROTH6</name>
<proteinExistence type="inferred from homology"/>
<organism>
    <name type="scientific">Rotavirus A (strain RVA/Human/Indonesia/69M/1980/G8P4[10])</name>
    <name type="common">RV-A</name>
    <dbReference type="NCBI Taxonomy" id="10947"/>
    <lineage>
        <taxon>Viruses</taxon>
        <taxon>Riboviria</taxon>
        <taxon>Orthornavirae</taxon>
        <taxon>Duplornaviricota</taxon>
        <taxon>Resentoviricetes</taxon>
        <taxon>Reovirales</taxon>
        <taxon>Sedoreoviridae</taxon>
        <taxon>Rotavirus</taxon>
        <taxon>Rotavirus A</taxon>
    </lineage>
</organism>
<protein>
    <recommendedName>
        <fullName evidence="2">Outer capsid glycoprotein VP7</fullName>
    </recommendedName>
</protein>
<organismHost>
    <name type="scientific">Homo sapiens</name>
    <name type="common">Human</name>
    <dbReference type="NCBI Taxonomy" id="9606"/>
</organismHost>
<reference key="1">
    <citation type="journal article" date="2008" name="J. Virol.">
        <title>Group A human rotavirus genomics: evidence that gene constellations are influenced by viral protein interactions.</title>
        <authorList>
            <person name="Heiman E.M."/>
            <person name="McDonald S.M."/>
            <person name="Barro M."/>
            <person name="Taraporewala Z.F."/>
            <person name="Bar-Magen T."/>
            <person name="Patton J.T."/>
        </authorList>
    </citation>
    <scope>NUCLEOTIDE SEQUENCE [GENOMIC DNA]</scope>
</reference>
<keyword id="KW-0024">Alternative initiation</keyword>
<keyword id="KW-0106">Calcium</keyword>
<keyword id="KW-0167">Capsid protein</keyword>
<keyword id="KW-1015">Disulfide bond</keyword>
<keyword id="KW-0325">Glycoprotein</keyword>
<keyword id="KW-1038">Host endoplasmic reticulum</keyword>
<keyword id="KW-0945">Host-virus interaction</keyword>
<keyword id="KW-0479">Metal-binding</keyword>
<keyword id="KW-1152">Outer capsid protein</keyword>
<keyword id="KW-0732">Signal</keyword>
<keyword id="KW-1146">T=13 icosahedral capsid protein</keyword>
<keyword id="KW-0946">Virion</keyword>
<accession>B3SRQ7</accession>
<evidence type="ECO:0000255" key="1"/>
<evidence type="ECO:0000255" key="2">
    <source>
        <dbReference type="HAMAP-Rule" id="MF_04131"/>
    </source>
</evidence>
<evidence type="ECO:0000305" key="3"/>
<comment type="function">
    <text evidence="2">Calcium-binding protein that interacts with rotavirus cell receptors once the initial attachment by VP4 has been achieved. Rotavirus attachment and entry into the host cell probably involves multiple sequential contacts between the outer capsid proteins VP4 and VP7, and the cell receptors. Following entry into the host cell, low intracellular or intravesicular Ca(2+) concentration probably causes the calcium-stabilized VP7 trimers to dissociate from the virion. This step is probably necessary for the membrane-disrupting entry step and the release of VP4, which is locked onto the virion by VP7.</text>
</comment>
<comment type="subunit">
    <text evidence="2">Homotrimer; disulfide-linked. 2 Ca(2+) ions bound at each subunit interface in the trimer hold the trimer together. Interacts with the intermediate capsid protein VP6. Interacts with the outer capsid protein VP5*.</text>
</comment>
<comment type="subcellular location">
    <subcellularLocation>
        <location evidence="2">Virion</location>
    </subcellularLocation>
    <subcellularLocation>
        <location evidence="2">Host endoplasmic reticulum lumen</location>
    </subcellularLocation>
    <text evidence="2">The outer layer contains 780 copies of VP7, grouped as 260 trimers. Immature double-layered particles assembled in the cytoplasm bud across the membrane of the endoplasmic reticulum, acquiring during this process a transient lipid membrane that is modified with the ER resident viral glycoproteins NSP4 and VP7; these enveloped particles also contain VP4. As the particles move towards the interior of the ER cisternae, the transient lipid membrane and the non-structural protein NSP4 are lost, while the virus surface proteins VP4 and VP7 rearrange to form the outermost virus protein layer, yielding mature infectious triple-layered particles.</text>
</comment>
<comment type="alternative products">
    <event type="alternative initiation"/>
    <isoform>
        <id>B3SRQ7-1</id>
        <name>1</name>
        <sequence type="displayed"/>
    </isoform>
    <isoform>
        <id>B3SRQ7-2</id>
        <name>2</name>
        <sequence type="described" ref="VSP_038617"/>
    </isoform>
</comment>
<comment type="PTM">
    <text evidence="2">N-glycosylated.</text>
</comment>
<comment type="PTM">
    <text evidence="2">The N-terminus is blocked possibly by pyroglutamic acid.</text>
</comment>
<comment type="miscellaneous">
    <text evidence="2">Some rotavirus strains are neuraminidase-sensitive and require sialic acid to attach to the cell surface. Some rotavirus strains are integrin-dependent. Some rotavirus strains depend on ganglioside for their entry into the host cell. Hsp70 also seems to be involved in the entry of some strains.</text>
</comment>
<comment type="miscellaneous">
    <text evidence="2">In group A rotaviruses, VP7 defines the G serotype.</text>
</comment>
<comment type="miscellaneous">
    <molecule>Isoform 2</molecule>
    <text evidence="3">Produced by alternative initiation at Met-30 of isoform 1.</text>
</comment>
<comment type="similarity">
    <text evidence="2">Belongs to the rotavirus VP7 family.</text>
</comment>